<feature type="chain" id="PRO_0000116664" description="INO80 complex subunit 2">
    <location>
        <begin position="1"/>
        <end position="295"/>
    </location>
</feature>
<feature type="region of interest" description="Disordered" evidence="2">
    <location>
        <begin position="1"/>
        <end position="265"/>
    </location>
</feature>
<feature type="compositionally biased region" description="Polar residues" evidence="2">
    <location>
        <begin position="16"/>
        <end position="29"/>
    </location>
</feature>
<feature type="compositionally biased region" description="Acidic residues" evidence="2">
    <location>
        <begin position="49"/>
        <end position="93"/>
    </location>
</feature>
<feature type="compositionally biased region" description="Basic residues" evidence="2">
    <location>
        <begin position="102"/>
        <end position="120"/>
    </location>
</feature>
<feature type="compositionally biased region" description="Acidic residues" evidence="2">
    <location>
        <begin position="125"/>
        <end position="139"/>
    </location>
</feature>
<feature type="compositionally biased region" description="Basic and acidic residues" evidence="2">
    <location>
        <begin position="194"/>
        <end position="225"/>
    </location>
</feature>
<feature type="compositionally biased region" description="Polar residues" evidence="2">
    <location>
        <begin position="246"/>
        <end position="255"/>
    </location>
</feature>
<feature type="modified residue" description="Phosphoserine" evidence="4">
    <location>
        <position position="128"/>
    </location>
</feature>
<gene>
    <name type="primary">ies2</name>
    <name type="ORF">SPAC6B12.05c</name>
</gene>
<organism>
    <name type="scientific">Schizosaccharomyces pombe (strain 972 / ATCC 24843)</name>
    <name type="common">Fission yeast</name>
    <dbReference type="NCBI Taxonomy" id="284812"/>
    <lineage>
        <taxon>Eukaryota</taxon>
        <taxon>Fungi</taxon>
        <taxon>Dikarya</taxon>
        <taxon>Ascomycota</taxon>
        <taxon>Taphrinomycotina</taxon>
        <taxon>Schizosaccharomycetes</taxon>
        <taxon>Schizosaccharomycetales</taxon>
        <taxon>Schizosaccharomycetaceae</taxon>
        <taxon>Schizosaccharomyces</taxon>
    </lineage>
</organism>
<keyword id="KW-0156">Chromatin regulator</keyword>
<keyword id="KW-0227">DNA damage</keyword>
<keyword id="KW-0234">DNA repair</keyword>
<keyword id="KW-0238">DNA-binding</keyword>
<keyword id="KW-0539">Nucleus</keyword>
<keyword id="KW-0597">Phosphoprotein</keyword>
<keyword id="KW-1185">Reference proteome</keyword>
<keyword id="KW-0804">Transcription</keyword>
<keyword id="KW-0805">Transcription regulation</keyword>
<dbReference type="EMBL" id="CU329670">
    <property type="protein sequence ID" value="CAB11067.1"/>
    <property type="molecule type" value="Genomic_DNA"/>
</dbReference>
<dbReference type="PIR" id="T39012">
    <property type="entry name" value="T39012"/>
</dbReference>
<dbReference type="RefSeq" id="NP_593760.1">
    <property type="nucleotide sequence ID" value="NM_001019190.2"/>
</dbReference>
<dbReference type="SMR" id="O14210"/>
<dbReference type="BioGRID" id="279654">
    <property type="interactions" value="78"/>
</dbReference>
<dbReference type="FunCoup" id="O14210">
    <property type="interactions" value="12"/>
</dbReference>
<dbReference type="STRING" id="284812.O14210"/>
<dbReference type="iPTMnet" id="O14210"/>
<dbReference type="PaxDb" id="4896-SPAC6B12.05c.1"/>
<dbReference type="EnsemblFungi" id="SPAC6B12.05c.1">
    <property type="protein sequence ID" value="SPAC6B12.05c.1:pep"/>
    <property type="gene ID" value="SPAC6B12.05c"/>
</dbReference>
<dbReference type="GeneID" id="2543226"/>
<dbReference type="KEGG" id="spo:2543226"/>
<dbReference type="PomBase" id="SPAC6B12.05c">
    <property type="gene designation" value="ies2"/>
</dbReference>
<dbReference type="VEuPathDB" id="FungiDB:SPAC6B12.05c"/>
<dbReference type="eggNOG" id="ENOG502S7M7">
    <property type="taxonomic scope" value="Eukaryota"/>
</dbReference>
<dbReference type="HOGENOM" id="CLU_943846_0_0_1"/>
<dbReference type="InParanoid" id="O14210"/>
<dbReference type="OMA" id="MYRWIST"/>
<dbReference type="PhylomeDB" id="O14210"/>
<dbReference type="PRO" id="PR:O14210"/>
<dbReference type="Proteomes" id="UP000002485">
    <property type="component" value="Chromosome I"/>
</dbReference>
<dbReference type="GO" id="GO:0031011">
    <property type="term" value="C:Ino80 complex"/>
    <property type="evidence" value="ECO:0000353"/>
    <property type="project" value="PomBase"/>
</dbReference>
<dbReference type="GO" id="GO:0005634">
    <property type="term" value="C:nucleus"/>
    <property type="evidence" value="ECO:0007005"/>
    <property type="project" value="PomBase"/>
</dbReference>
<dbReference type="GO" id="GO:0003677">
    <property type="term" value="F:DNA binding"/>
    <property type="evidence" value="ECO:0007669"/>
    <property type="project" value="UniProtKB-KW"/>
</dbReference>
<dbReference type="GO" id="GO:0034080">
    <property type="term" value="P:CENP-A containing chromatin assembly"/>
    <property type="evidence" value="ECO:0000315"/>
    <property type="project" value="PomBase"/>
</dbReference>
<dbReference type="GO" id="GO:0006281">
    <property type="term" value="P:DNA repair"/>
    <property type="evidence" value="ECO:0007669"/>
    <property type="project" value="UniProtKB-KW"/>
</dbReference>
<dbReference type="GO" id="GO:0140861">
    <property type="term" value="P:DNA repair-dependent chromatin remodeling"/>
    <property type="evidence" value="ECO:0000269"/>
    <property type="project" value="PomBase"/>
</dbReference>
<dbReference type="GO" id="GO:0045815">
    <property type="term" value="P:transcription initiation-coupled chromatin remodeling"/>
    <property type="evidence" value="ECO:0000269"/>
    <property type="project" value="PomBase"/>
</dbReference>
<dbReference type="InterPro" id="IPR029523">
    <property type="entry name" value="INO80B/Ies2"/>
</dbReference>
<dbReference type="InterPro" id="IPR006880">
    <property type="entry name" value="INO80B_C"/>
</dbReference>
<dbReference type="PANTHER" id="PTHR21561">
    <property type="entry name" value="INO80 COMPLEX SUBUNIT B"/>
    <property type="match status" value="1"/>
</dbReference>
<dbReference type="PANTHER" id="PTHR21561:SF12">
    <property type="entry name" value="INO80 COMPLEX SUBUNIT B"/>
    <property type="match status" value="1"/>
</dbReference>
<dbReference type="Pfam" id="PF04795">
    <property type="entry name" value="PAPA-1"/>
    <property type="match status" value="1"/>
</dbReference>
<dbReference type="SMART" id="SM01406">
    <property type="entry name" value="PAPA-1"/>
    <property type="match status" value="1"/>
</dbReference>
<name>IES2_SCHPO</name>
<evidence type="ECO:0000250" key="1"/>
<evidence type="ECO:0000256" key="2">
    <source>
        <dbReference type="SAM" id="MobiDB-lite"/>
    </source>
</evidence>
<evidence type="ECO:0000269" key="3">
    <source>
    </source>
</evidence>
<evidence type="ECO:0000269" key="4">
    <source>
    </source>
</evidence>
<evidence type="ECO:0000305" key="5"/>
<proteinExistence type="evidence at protein level"/>
<accession>O14210</accession>
<protein>
    <recommendedName>
        <fullName>INO80 complex subunit 2</fullName>
    </recommendedName>
</protein>
<sequence length="295" mass="33536">MARRRSTRRALVETPSDLNAQDSDSLSVSTKEELGDDALAAEEGQSVLDEQEIEEALEEDDTNYEEDIIDDEESAQVDEEELEEEEEEEEDATPEPVVTSKKNSRSKPKNGGASKRKASRRTVVDEDSENLEGDEEDGSFSDLKDLYSNPMPAQTTPVSMRMTKRQRAIQGILEEGEEDELLELPPETSGRKKLTPEEMALRRIENARRRKNQSERRLEEEKMETINRLLKRQSNTGKPRRGRAPNNPTSDSISRSKAVPKDRINMYQPFQCVRFKSTKEGSSLGVPEPLIRFFS</sequence>
<reference key="1">
    <citation type="journal article" date="2002" name="Nature">
        <title>The genome sequence of Schizosaccharomyces pombe.</title>
        <authorList>
            <person name="Wood V."/>
            <person name="Gwilliam R."/>
            <person name="Rajandream M.A."/>
            <person name="Lyne M.H."/>
            <person name="Lyne R."/>
            <person name="Stewart A."/>
            <person name="Sgouros J.G."/>
            <person name="Peat N."/>
            <person name="Hayles J."/>
            <person name="Baker S.G."/>
            <person name="Basham D."/>
            <person name="Bowman S."/>
            <person name="Brooks K."/>
            <person name="Brown D."/>
            <person name="Brown S."/>
            <person name="Chillingworth T."/>
            <person name="Churcher C.M."/>
            <person name="Collins M."/>
            <person name="Connor R."/>
            <person name="Cronin A."/>
            <person name="Davis P."/>
            <person name="Feltwell T."/>
            <person name="Fraser A."/>
            <person name="Gentles S."/>
            <person name="Goble A."/>
            <person name="Hamlin N."/>
            <person name="Harris D.E."/>
            <person name="Hidalgo J."/>
            <person name="Hodgson G."/>
            <person name="Holroyd S."/>
            <person name="Hornsby T."/>
            <person name="Howarth S."/>
            <person name="Huckle E.J."/>
            <person name="Hunt S."/>
            <person name="Jagels K."/>
            <person name="James K.D."/>
            <person name="Jones L."/>
            <person name="Jones M."/>
            <person name="Leather S."/>
            <person name="McDonald S."/>
            <person name="McLean J."/>
            <person name="Mooney P."/>
            <person name="Moule S."/>
            <person name="Mungall K.L."/>
            <person name="Murphy L.D."/>
            <person name="Niblett D."/>
            <person name="Odell C."/>
            <person name="Oliver K."/>
            <person name="O'Neil S."/>
            <person name="Pearson D."/>
            <person name="Quail M.A."/>
            <person name="Rabbinowitsch E."/>
            <person name="Rutherford K.M."/>
            <person name="Rutter S."/>
            <person name="Saunders D."/>
            <person name="Seeger K."/>
            <person name="Sharp S."/>
            <person name="Skelton J."/>
            <person name="Simmonds M.N."/>
            <person name="Squares R."/>
            <person name="Squares S."/>
            <person name="Stevens K."/>
            <person name="Taylor K."/>
            <person name="Taylor R.G."/>
            <person name="Tivey A."/>
            <person name="Walsh S.V."/>
            <person name="Warren T."/>
            <person name="Whitehead S."/>
            <person name="Woodward J.R."/>
            <person name="Volckaert G."/>
            <person name="Aert R."/>
            <person name="Robben J."/>
            <person name="Grymonprez B."/>
            <person name="Weltjens I."/>
            <person name="Vanstreels E."/>
            <person name="Rieger M."/>
            <person name="Schaefer M."/>
            <person name="Mueller-Auer S."/>
            <person name="Gabel C."/>
            <person name="Fuchs M."/>
            <person name="Duesterhoeft A."/>
            <person name="Fritzc C."/>
            <person name="Holzer E."/>
            <person name="Moestl D."/>
            <person name="Hilbert H."/>
            <person name="Borzym K."/>
            <person name="Langer I."/>
            <person name="Beck A."/>
            <person name="Lehrach H."/>
            <person name="Reinhardt R."/>
            <person name="Pohl T.M."/>
            <person name="Eger P."/>
            <person name="Zimmermann W."/>
            <person name="Wedler H."/>
            <person name="Wambutt R."/>
            <person name="Purnelle B."/>
            <person name="Goffeau A."/>
            <person name="Cadieu E."/>
            <person name="Dreano S."/>
            <person name="Gloux S."/>
            <person name="Lelaure V."/>
            <person name="Mottier S."/>
            <person name="Galibert F."/>
            <person name="Aves S.J."/>
            <person name="Xiang Z."/>
            <person name="Hunt C."/>
            <person name="Moore K."/>
            <person name="Hurst S.M."/>
            <person name="Lucas M."/>
            <person name="Rochet M."/>
            <person name="Gaillardin C."/>
            <person name="Tallada V.A."/>
            <person name="Garzon A."/>
            <person name="Thode G."/>
            <person name="Daga R.R."/>
            <person name="Cruzado L."/>
            <person name="Jimenez J."/>
            <person name="Sanchez M."/>
            <person name="del Rey F."/>
            <person name="Benito J."/>
            <person name="Dominguez A."/>
            <person name="Revuelta J.L."/>
            <person name="Moreno S."/>
            <person name="Armstrong J."/>
            <person name="Forsburg S.L."/>
            <person name="Cerutti L."/>
            <person name="Lowe T."/>
            <person name="McCombie W.R."/>
            <person name="Paulsen I."/>
            <person name="Potashkin J."/>
            <person name="Shpakovski G.V."/>
            <person name="Ussery D."/>
            <person name="Barrell B.G."/>
            <person name="Nurse P."/>
        </authorList>
    </citation>
    <scope>NUCLEOTIDE SEQUENCE [LARGE SCALE GENOMIC DNA]</scope>
    <source>
        <strain>972 / ATCC 24843</strain>
    </source>
</reference>
<reference key="2">
    <citation type="journal article" date="2006" name="Nat. Biotechnol.">
        <title>ORFeome cloning and global analysis of protein localization in the fission yeast Schizosaccharomyces pombe.</title>
        <authorList>
            <person name="Matsuyama A."/>
            <person name="Arai R."/>
            <person name="Yashiroda Y."/>
            <person name="Shirai A."/>
            <person name="Kamata A."/>
            <person name="Sekido S."/>
            <person name="Kobayashi Y."/>
            <person name="Hashimoto A."/>
            <person name="Hamamoto M."/>
            <person name="Hiraoka Y."/>
            <person name="Horinouchi S."/>
            <person name="Yoshida M."/>
        </authorList>
    </citation>
    <scope>SUBCELLULAR LOCATION [LARGE SCALE ANALYSIS]</scope>
</reference>
<reference key="3">
    <citation type="journal article" date="2008" name="J. Proteome Res.">
        <title>Phosphoproteome analysis of fission yeast.</title>
        <authorList>
            <person name="Wilson-Grady J.T."/>
            <person name="Villen J."/>
            <person name="Gygi S.P."/>
        </authorList>
    </citation>
    <scope>PHOSPHORYLATION [LARGE SCALE ANALYSIS] AT SER-128</scope>
    <scope>IDENTIFICATION BY MASS SPECTROMETRY</scope>
</reference>
<comment type="function">
    <text evidence="1">Component of the INO80 complex which remodels chromatin by shifting nucleosomes and is involved in DNA repair.</text>
</comment>
<comment type="subunit">
    <text evidence="1">Component of the INO80 chromatin remodeling complex.</text>
</comment>
<comment type="subcellular location">
    <subcellularLocation>
        <location evidence="3">Nucleus</location>
    </subcellularLocation>
</comment>
<comment type="similarity">
    <text evidence="5">Belongs to the IES2 family.</text>
</comment>